<comment type="sequence caution" evidence="2">
    <conflict type="erroneous initiation">
        <sequence resource="EMBL-CDS" id="ACH51158"/>
    </conflict>
</comment>
<evidence type="ECO:0000255" key="1">
    <source>
        <dbReference type="HAMAP-Rule" id="MF_01866"/>
    </source>
</evidence>
<evidence type="ECO:0000305" key="2"/>
<dbReference type="EMBL" id="CP001138">
    <property type="protein sequence ID" value="ACH51158.1"/>
    <property type="status" value="ALT_INIT"/>
    <property type="molecule type" value="Genomic_DNA"/>
</dbReference>
<dbReference type="SMR" id="B5F3S9"/>
<dbReference type="KEGG" id="sea:SeAg_B1320"/>
<dbReference type="HOGENOM" id="CLU_1873951_0_0_6"/>
<dbReference type="Proteomes" id="UP000008819">
    <property type="component" value="Chromosome"/>
</dbReference>
<dbReference type="Gene3D" id="3.10.510.20">
    <property type="entry name" value="YcgL domain"/>
    <property type="match status" value="1"/>
</dbReference>
<dbReference type="HAMAP" id="MF_01866">
    <property type="entry name" value="UPF0745"/>
    <property type="match status" value="1"/>
</dbReference>
<dbReference type="InterPro" id="IPR038068">
    <property type="entry name" value="YcgL-like_sf"/>
</dbReference>
<dbReference type="InterPro" id="IPR027354">
    <property type="entry name" value="YcgL_dom"/>
</dbReference>
<dbReference type="PANTHER" id="PTHR38109">
    <property type="entry name" value="PROTEIN YCGL"/>
    <property type="match status" value="1"/>
</dbReference>
<dbReference type="PANTHER" id="PTHR38109:SF1">
    <property type="entry name" value="PROTEIN YCGL"/>
    <property type="match status" value="1"/>
</dbReference>
<dbReference type="Pfam" id="PF05166">
    <property type="entry name" value="YcgL"/>
    <property type="match status" value="1"/>
</dbReference>
<dbReference type="SUPFAM" id="SSF160191">
    <property type="entry name" value="YcgL-like"/>
    <property type="match status" value="1"/>
</dbReference>
<dbReference type="PROSITE" id="PS51648">
    <property type="entry name" value="YCGL"/>
    <property type="match status" value="1"/>
</dbReference>
<organism>
    <name type="scientific">Salmonella agona (strain SL483)</name>
    <dbReference type="NCBI Taxonomy" id="454166"/>
    <lineage>
        <taxon>Bacteria</taxon>
        <taxon>Pseudomonadati</taxon>
        <taxon>Pseudomonadota</taxon>
        <taxon>Gammaproteobacteria</taxon>
        <taxon>Enterobacterales</taxon>
        <taxon>Enterobacteriaceae</taxon>
        <taxon>Salmonella</taxon>
    </lineage>
</organism>
<reference key="1">
    <citation type="journal article" date="2011" name="J. Bacteriol.">
        <title>Comparative genomics of 28 Salmonella enterica isolates: evidence for CRISPR-mediated adaptive sublineage evolution.</title>
        <authorList>
            <person name="Fricke W.F."/>
            <person name="Mammel M.K."/>
            <person name="McDermott P.F."/>
            <person name="Tartera C."/>
            <person name="White D.G."/>
            <person name="Leclerc J.E."/>
            <person name="Ravel J."/>
            <person name="Cebula T.A."/>
        </authorList>
    </citation>
    <scope>NUCLEOTIDE SEQUENCE [LARGE SCALE GENOMIC DNA]</scope>
    <source>
        <strain>SL483</strain>
    </source>
</reference>
<accession>B5F3S9</accession>
<name>YCGL_SALA4</name>
<proteinExistence type="inferred from homology"/>
<gene>
    <name evidence="1" type="primary">ycgL</name>
    <name type="ordered locus">SeAg_B1320</name>
</gene>
<sequence>MRQVTIPLIQSKSMFCVIYRSSKRDQTYLYVEKKDDFSRVPEALMKGFGQPQLAMMLPLDGRKKLVNAELEKVKQALSEQGYYLQLPPPPEDLLKQHLSSVG</sequence>
<feature type="chain" id="PRO_0000375348" description="Protein YcgL">
    <location>
        <begin position="1"/>
        <end position="102"/>
    </location>
</feature>
<feature type="domain" description="YcgL" evidence="1">
    <location>
        <begin position="14"/>
        <end position="98"/>
    </location>
</feature>
<protein>
    <recommendedName>
        <fullName evidence="1">Protein YcgL</fullName>
    </recommendedName>
</protein>